<name>RS12_BORA1</name>
<comment type="function">
    <text evidence="2">With S4 and S5 plays an important role in translational accuracy.</text>
</comment>
<comment type="function">
    <text evidence="2">Interacts with and stabilizes bases of the 16S rRNA that are involved in tRNA selection in the A site and with the mRNA backbone. Located at the interface of the 30S and 50S subunits, it traverses the body of the 30S subunit contacting proteins on the other side and probably holding the rRNA structure together. The combined cluster of proteins S8, S12 and S17 appears to hold together the shoulder and platform of the 30S subunit.</text>
</comment>
<comment type="subunit">
    <text evidence="2">Part of the 30S ribosomal subunit. Contacts proteins S8 and S17. May interact with IF1 in the 30S initiation complex.</text>
</comment>
<comment type="similarity">
    <text evidence="2">Belongs to the universal ribosomal protein uS12 family.</text>
</comment>
<dbReference type="EMBL" id="AM167904">
    <property type="protein sequence ID" value="CAJ47604.1"/>
    <property type="molecule type" value="Genomic_DNA"/>
</dbReference>
<dbReference type="RefSeq" id="WP_005017264.1">
    <property type="nucleotide sequence ID" value="NC_010645.1"/>
</dbReference>
<dbReference type="SMR" id="Q2L2H8"/>
<dbReference type="STRING" id="360910.BAV0020"/>
<dbReference type="GeneID" id="94357751"/>
<dbReference type="KEGG" id="bav:BAV0020"/>
<dbReference type="eggNOG" id="COG0048">
    <property type="taxonomic scope" value="Bacteria"/>
</dbReference>
<dbReference type="HOGENOM" id="CLU_104295_1_2_4"/>
<dbReference type="OrthoDB" id="9802366at2"/>
<dbReference type="Proteomes" id="UP000001977">
    <property type="component" value="Chromosome"/>
</dbReference>
<dbReference type="GO" id="GO:0015935">
    <property type="term" value="C:small ribosomal subunit"/>
    <property type="evidence" value="ECO:0007669"/>
    <property type="project" value="InterPro"/>
</dbReference>
<dbReference type="GO" id="GO:0019843">
    <property type="term" value="F:rRNA binding"/>
    <property type="evidence" value="ECO:0007669"/>
    <property type="project" value="UniProtKB-UniRule"/>
</dbReference>
<dbReference type="GO" id="GO:0003735">
    <property type="term" value="F:structural constituent of ribosome"/>
    <property type="evidence" value="ECO:0007669"/>
    <property type="project" value="InterPro"/>
</dbReference>
<dbReference type="GO" id="GO:0000049">
    <property type="term" value="F:tRNA binding"/>
    <property type="evidence" value="ECO:0007669"/>
    <property type="project" value="UniProtKB-UniRule"/>
</dbReference>
<dbReference type="GO" id="GO:0006412">
    <property type="term" value="P:translation"/>
    <property type="evidence" value="ECO:0007669"/>
    <property type="project" value="UniProtKB-UniRule"/>
</dbReference>
<dbReference type="CDD" id="cd03368">
    <property type="entry name" value="Ribosomal_S12"/>
    <property type="match status" value="1"/>
</dbReference>
<dbReference type="FunFam" id="2.40.50.140:FF:000001">
    <property type="entry name" value="30S ribosomal protein S12"/>
    <property type="match status" value="1"/>
</dbReference>
<dbReference type="Gene3D" id="2.40.50.140">
    <property type="entry name" value="Nucleic acid-binding proteins"/>
    <property type="match status" value="1"/>
</dbReference>
<dbReference type="HAMAP" id="MF_00403_B">
    <property type="entry name" value="Ribosomal_uS12_B"/>
    <property type="match status" value="1"/>
</dbReference>
<dbReference type="InterPro" id="IPR012340">
    <property type="entry name" value="NA-bd_OB-fold"/>
</dbReference>
<dbReference type="InterPro" id="IPR006032">
    <property type="entry name" value="Ribosomal_uS12"/>
</dbReference>
<dbReference type="InterPro" id="IPR005679">
    <property type="entry name" value="Ribosomal_uS12_bac"/>
</dbReference>
<dbReference type="NCBIfam" id="TIGR00981">
    <property type="entry name" value="rpsL_bact"/>
    <property type="match status" value="1"/>
</dbReference>
<dbReference type="PANTHER" id="PTHR11652">
    <property type="entry name" value="30S RIBOSOMAL PROTEIN S12 FAMILY MEMBER"/>
    <property type="match status" value="1"/>
</dbReference>
<dbReference type="Pfam" id="PF00164">
    <property type="entry name" value="Ribosom_S12_S23"/>
    <property type="match status" value="1"/>
</dbReference>
<dbReference type="PIRSF" id="PIRSF002133">
    <property type="entry name" value="Ribosomal_S12/S23"/>
    <property type="match status" value="1"/>
</dbReference>
<dbReference type="PRINTS" id="PR01034">
    <property type="entry name" value="RIBOSOMALS12"/>
</dbReference>
<dbReference type="SUPFAM" id="SSF50249">
    <property type="entry name" value="Nucleic acid-binding proteins"/>
    <property type="match status" value="1"/>
</dbReference>
<dbReference type="PROSITE" id="PS00055">
    <property type="entry name" value="RIBOSOMAL_S12"/>
    <property type="match status" value="1"/>
</dbReference>
<protein>
    <recommendedName>
        <fullName evidence="2">Small ribosomal subunit protein uS12</fullName>
    </recommendedName>
    <alternativeName>
        <fullName evidence="3">30S ribosomal protein S12</fullName>
    </alternativeName>
</protein>
<keyword id="KW-0488">Methylation</keyword>
<keyword id="KW-1185">Reference proteome</keyword>
<keyword id="KW-0687">Ribonucleoprotein</keyword>
<keyword id="KW-0689">Ribosomal protein</keyword>
<keyword id="KW-0694">RNA-binding</keyword>
<keyword id="KW-0699">rRNA-binding</keyword>
<keyword id="KW-0820">tRNA-binding</keyword>
<gene>
    <name evidence="2" type="primary">rpsL</name>
    <name type="ordered locus">BAV0020</name>
</gene>
<evidence type="ECO:0000250" key="1"/>
<evidence type="ECO:0000255" key="2">
    <source>
        <dbReference type="HAMAP-Rule" id="MF_00403"/>
    </source>
</evidence>
<evidence type="ECO:0000305" key="3"/>
<proteinExistence type="inferred from homology"/>
<organism>
    <name type="scientific">Bordetella avium (strain 197N)</name>
    <dbReference type="NCBI Taxonomy" id="360910"/>
    <lineage>
        <taxon>Bacteria</taxon>
        <taxon>Pseudomonadati</taxon>
        <taxon>Pseudomonadota</taxon>
        <taxon>Betaproteobacteria</taxon>
        <taxon>Burkholderiales</taxon>
        <taxon>Alcaligenaceae</taxon>
        <taxon>Bordetella</taxon>
    </lineage>
</organism>
<sequence length="125" mass="13958">MPTISQLVRKPREVSIIKSKSPALENCPQRRGVCTRVYTTTPKKPNSALRKVAKVRLTNGYEVISYIGGEGHNLQEHSVVLVRGGRVKDLPGVRYHIVRGSLDLQGVKDRKQARSKYGAKRPKKA</sequence>
<accession>Q2L2H8</accession>
<feature type="chain" id="PRO_0000238128" description="Small ribosomal subunit protein uS12">
    <location>
        <begin position="1"/>
        <end position="125"/>
    </location>
</feature>
<feature type="modified residue" description="3-methylthioaspartic acid" evidence="1">
    <location>
        <position position="89"/>
    </location>
</feature>
<reference key="1">
    <citation type="journal article" date="2006" name="J. Bacteriol.">
        <title>Comparison of the genome sequence of the poultry pathogen Bordetella avium with those of B. bronchiseptica, B. pertussis, and B. parapertussis reveals extensive diversity in surface structures associated with host interaction.</title>
        <authorList>
            <person name="Sebaihia M."/>
            <person name="Preston A."/>
            <person name="Maskell D.J."/>
            <person name="Kuzmiak H."/>
            <person name="Connell T.D."/>
            <person name="King N.D."/>
            <person name="Orndorff P.E."/>
            <person name="Miyamoto D.M."/>
            <person name="Thomson N.R."/>
            <person name="Harris D."/>
            <person name="Goble A."/>
            <person name="Lord A."/>
            <person name="Murphy L."/>
            <person name="Quail M.A."/>
            <person name="Rutter S."/>
            <person name="Squares R."/>
            <person name="Squares S."/>
            <person name="Woodward J."/>
            <person name="Parkhill J."/>
            <person name="Temple L.M."/>
        </authorList>
    </citation>
    <scope>NUCLEOTIDE SEQUENCE [LARGE SCALE GENOMIC DNA]</scope>
    <source>
        <strain>197N</strain>
    </source>
</reference>